<protein>
    <recommendedName>
        <fullName evidence="1">Large ribosomal subunit protein uL14</fullName>
    </recommendedName>
    <alternativeName>
        <fullName evidence="2">50S ribosomal protein L14</fullName>
    </alternativeName>
</protein>
<name>RL14_ENTFA</name>
<organism>
    <name type="scientific">Enterococcus faecalis (strain ATCC 700802 / V583)</name>
    <dbReference type="NCBI Taxonomy" id="226185"/>
    <lineage>
        <taxon>Bacteria</taxon>
        <taxon>Bacillati</taxon>
        <taxon>Bacillota</taxon>
        <taxon>Bacilli</taxon>
        <taxon>Lactobacillales</taxon>
        <taxon>Enterococcaceae</taxon>
        <taxon>Enterococcus</taxon>
    </lineage>
</organism>
<reference key="1">
    <citation type="journal article" date="2003" name="Science">
        <title>Role of mobile DNA in the evolution of vancomycin-resistant Enterococcus faecalis.</title>
        <authorList>
            <person name="Paulsen I.T."/>
            <person name="Banerjei L."/>
            <person name="Myers G.S.A."/>
            <person name="Nelson K.E."/>
            <person name="Seshadri R."/>
            <person name="Read T.D."/>
            <person name="Fouts D.E."/>
            <person name="Eisen J.A."/>
            <person name="Gill S.R."/>
            <person name="Heidelberg J.F."/>
            <person name="Tettelin H."/>
            <person name="Dodson R.J."/>
            <person name="Umayam L.A."/>
            <person name="Brinkac L.M."/>
            <person name="Beanan M.J."/>
            <person name="Daugherty S.C."/>
            <person name="DeBoy R.T."/>
            <person name="Durkin S.A."/>
            <person name="Kolonay J.F."/>
            <person name="Madupu R."/>
            <person name="Nelson W.C."/>
            <person name="Vamathevan J.J."/>
            <person name="Tran B."/>
            <person name="Upton J."/>
            <person name="Hansen T."/>
            <person name="Shetty J."/>
            <person name="Khouri H.M."/>
            <person name="Utterback T.R."/>
            <person name="Radune D."/>
            <person name="Ketchum K.A."/>
            <person name="Dougherty B.A."/>
            <person name="Fraser C.M."/>
        </authorList>
    </citation>
    <scope>NUCLEOTIDE SEQUENCE [LARGE SCALE GENOMIC DNA]</scope>
    <source>
        <strain>ATCC 700802 / V583</strain>
    </source>
</reference>
<evidence type="ECO:0000255" key="1">
    <source>
        <dbReference type="HAMAP-Rule" id="MF_01367"/>
    </source>
</evidence>
<evidence type="ECO:0000305" key="2"/>
<evidence type="ECO:0007829" key="3">
    <source>
        <dbReference type="PDB" id="6WU9"/>
    </source>
</evidence>
<accession>Q839F4</accession>
<sequence>MIQQESRLRVADNSGAREILTIKVLGGSGRKTANIGDVIVATVKQATPGGVVKKGEVVKAVIVRTKSGARRADGSYIKFDENAAVIIRDDKSPRGTRIFGPVARELRENNFMKIVSLAPEVL</sequence>
<dbReference type="EMBL" id="AE016830">
    <property type="protein sequence ID" value="AAO80085.1"/>
    <property type="molecule type" value="Genomic_DNA"/>
</dbReference>
<dbReference type="RefSeq" id="NP_814014.1">
    <property type="nucleotide sequence ID" value="NC_004668.1"/>
</dbReference>
<dbReference type="RefSeq" id="WP_002356211.1">
    <property type="nucleotide sequence ID" value="NZ_KE136524.1"/>
</dbReference>
<dbReference type="PDB" id="6WU9">
    <property type="method" value="EM"/>
    <property type="resolution" value="2.90 A"/>
    <property type="chains" value="L=1-122"/>
</dbReference>
<dbReference type="PDB" id="7P7Q">
    <property type="method" value="EM"/>
    <property type="resolution" value="2.40 A"/>
    <property type="chains" value="N=1-122"/>
</dbReference>
<dbReference type="PDB" id="7P7R">
    <property type="method" value="EM"/>
    <property type="resolution" value="2.90 A"/>
    <property type="chains" value="N=1-122"/>
</dbReference>
<dbReference type="PDBsum" id="6WU9"/>
<dbReference type="PDBsum" id="7P7Q"/>
<dbReference type="PDBsum" id="7P7R"/>
<dbReference type="EMDB" id="EMD-13241"/>
<dbReference type="EMDB" id="EMD-13242"/>
<dbReference type="SMR" id="Q839F4"/>
<dbReference type="STRING" id="226185.EF_0216"/>
<dbReference type="EnsemblBacteria" id="AAO80085">
    <property type="protein sequence ID" value="AAO80085"/>
    <property type="gene ID" value="EF_0216"/>
</dbReference>
<dbReference type="GeneID" id="60892711"/>
<dbReference type="KEGG" id="efa:EF0216"/>
<dbReference type="PATRIC" id="fig|226185.45.peg.50"/>
<dbReference type="eggNOG" id="COG0093">
    <property type="taxonomic scope" value="Bacteria"/>
</dbReference>
<dbReference type="HOGENOM" id="CLU_095071_2_1_9"/>
<dbReference type="Proteomes" id="UP000001415">
    <property type="component" value="Chromosome"/>
</dbReference>
<dbReference type="GO" id="GO:0022625">
    <property type="term" value="C:cytosolic large ribosomal subunit"/>
    <property type="evidence" value="ECO:0007669"/>
    <property type="project" value="TreeGrafter"/>
</dbReference>
<dbReference type="GO" id="GO:0070180">
    <property type="term" value="F:large ribosomal subunit rRNA binding"/>
    <property type="evidence" value="ECO:0007669"/>
    <property type="project" value="TreeGrafter"/>
</dbReference>
<dbReference type="GO" id="GO:0003735">
    <property type="term" value="F:structural constituent of ribosome"/>
    <property type="evidence" value="ECO:0007669"/>
    <property type="project" value="InterPro"/>
</dbReference>
<dbReference type="GO" id="GO:0006412">
    <property type="term" value="P:translation"/>
    <property type="evidence" value="ECO:0007669"/>
    <property type="project" value="UniProtKB-UniRule"/>
</dbReference>
<dbReference type="CDD" id="cd00337">
    <property type="entry name" value="Ribosomal_uL14"/>
    <property type="match status" value="1"/>
</dbReference>
<dbReference type="FunFam" id="2.40.150.20:FF:000001">
    <property type="entry name" value="50S ribosomal protein L14"/>
    <property type="match status" value="1"/>
</dbReference>
<dbReference type="Gene3D" id="2.40.150.20">
    <property type="entry name" value="Ribosomal protein L14"/>
    <property type="match status" value="1"/>
</dbReference>
<dbReference type="HAMAP" id="MF_01367">
    <property type="entry name" value="Ribosomal_uL14"/>
    <property type="match status" value="1"/>
</dbReference>
<dbReference type="InterPro" id="IPR000218">
    <property type="entry name" value="Ribosomal_uL14"/>
</dbReference>
<dbReference type="InterPro" id="IPR005745">
    <property type="entry name" value="Ribosomal_uL14_bac-type"/>
</dbReference>
<dbReference type="InterPro" id="IPR019972">
    <property type="entry name" value="Ribosomal_uL14_CS"/>
</dbReference>
<dbReference type="InterPro" id="IPR036853">
    <property type="entry name" value="Ribosomal_uL14_sf"/>
</dbReference>
<dbReference type="NCBIfam" id="TIGR01067">
    <property type="entry name" value="rplN_bact"/>
    <property type="match status" value="1"/>
</dbReference>
<dbReference type="PANTHER" id="PTHR11761">
    <property type="entry name" value="50S/60S RIBOSOMAL PROTEIN L14/L23"/>
    <property type="match status" value="1"/>
</dbReference>
<dbReference type="PANTHER" id="PTHR11761:SF3">
    <property type="entry name" value="LARGE RIBOSOMAL SUBUNIT PROTEIN UL14M"/>
    <property type="match status" value="1"/>
</dbReference>
<dbReference type="Pfam" id="PF00238">
    <property type="entry name" value="Ribosomal_L14"/>
    <property type="match status" value="1"/>
</dbReference>
<dbReference type="SMART" id="SM01374">
    <property type="entry name" value="Ribosomal_L14"/>
    <property type="match status" value="1"/>
</dbReference>
<dbReference type="SUPFAM" id="SSF50193">
    <property type="entry name" value="Ribosomal protein L14"/>
    <property type="match status" value="1"/>
</dbReference>
<dbReference type="PROSITE" id="PS00049">
    <property type="entry name" value="RIBOSOMAL_L14"/>
    <property type="match status" value="1"/>
</dbReference>
<proteinExistence type="evidence at protein level"/>
<keyword id="KW-0002">3D-structure</keyword>
<keyword id="KW-1185">Reference proteome</keyword>
<keyword id="KW-0687">Ribonucleoprotein</keyword>
<keyword id="KW-0689">Ribosomal protein</keyword>
<keyword id="KW-0694">RNA-binding</keyword>
<keyword id="KW-0699">rRNA-binding</keyword>
<feature type="chain" id="PRO_1000055577" description="Large ribosomal subunit protein uL14">
    <location>
        <begin position="1"/>
        <end position="122"/>
    </location>
</feature>
<feature type="strand" evidence="3">
    <location>
        <begin position="7"/>
        <end position="10"/>
    </location>
</feature>
<feature type="strand" evidence="3">
    <location>
        <begin position="12"/>
        <end position="23"/>
    </location>
</feature>
<feature type="strand" evidence="3">
    <location>
        <begin position="26"/>
        <end position="29"/>
    </location>
</feature>
<feature type="strand" evidence="3">
    <location>
        <begin position="38"/>
        <end position="46"/>
    </location>
</feature>
<feature type="strand" evidence="3">
    <location>
        <begin position="57"/>
        <end position="63"/>
    </location>
</feature>
<feature type="strand" evidence="3">
    <location>
        <begin position="76"/>
        <end position="81"/>
    </location>
</feature>
<feature type="strand" evidence="3">
    <location>
        <begin position="83"/>
        <end position="87"/>
    </location>
</feature>
<feature type="strand" evidence="3">
    <location>
        <begin position="89"/>
        <end position="91"/>
    </location>
</feature>
<feature type="strand" evidence="3">
    <location>
        <begin position="93"/>
        <end position="96"/>
    </location>
</feature>
<feature type="helix" evidence="3">
    <location>
        <begin position="105"/>
        <end position="108"/>
    </location>
</feature>
<feature type="turn" evidence="3">
    <location>
        <begin position="112"/>
        <end position="117"/>
    </location>
</feature>
<comment type="function">
    <text evidence="1">Binds to 23S rRNA. Forms part of two intersubunit bridges in the 70S ribosome.</text>
</comment>
<comment type="subunit">
    <text evidence="1">Part of the 50S ribosomal subunit. Forms a cluster with proteins L3 and L19. In the 70S ribosome, L14 and L19 interact and together make contacts with the 16S rRNA in bridges B5 and B8.</text>
</comment>
<comment type="similarity">
    <text evidence="1">Belongs to the universal ribosomal protein uL14 family.</text>
</comment>
<gene>
    <name evidence="1" type="primary">rplN</name>
    <name type="ordered locus">EF_0216</name>
</gene>